<comment type="function">
    <text evidence="1">Binds to 23S rRNA. Forms part of two intersubunit bridges in the 70S ribosome.</text>
</comment>
<comment type="subunit">
    <text evidence="1">Part of the 50S ribosomal subunit. Forms a cluster with proteins L3 and L19. In the 70S ribosome, L14 and L19 interact and together make contacts with the 16S rRNA in bridges B5 and B8.</text>
</comment>
<comment type="similarity">
    <text evidence="1">Belongs to the universal ribosomal protein uL14 family.</text>
</comment>
<dbReference type="EMBL" id="CP001277">
    <property type="protein sequence ID" value="ACQ68451.1"/>
    <property type="molecule type" value="Genomic_DNA"/>
</dbReference>
<dbReference type="RefSeq" id="WP_015874215.1">
    <property type="nucleotide sequence ID" value="NC_012751.1"/>
</dbReference>
<dbReference type="SMR" id="C4K7A8"/>
<dbReference type="STRING" id="572265.HDEF_1856"/>
<dbReference type="GeneID" id="66261441"/>
<dbReference type="KEGG" id="hde:HDEF_1856"/>
<dbReference type="eggNOG" id="COG0093">
    <property type="taxonomic scope" value="Bacteria"/>
</dbReference>
<dbReference type="HOGENOM" id="CLU_095071_2_1_6"/>
<dbReference type="Proteomes" id="UP000002334">
    <property type="component" value="Chromosome"/>
</dbReference>
<dbReference type="GO" id="GO:0022625">
    <property type="term" value="C:cytosolic large ribosomal subunit"/>
    <property type="evidence" value="ECO:0007669"/>
    <property type="project" value="TreeGrafter"/>
</dbReference>
<dbReference type="GO" id="GO:0070180">
    <property type="term" value="F:large ribosomal subunit rRNA binding"/>
    <property type="evidence" value="ECO:0007669"/>
    <property type="project" value="TreeGrafter"/>
</dbReference>
<dbReference type="GO" id="GO:0003735">
    <property type="term" value="F:structural constituent of ribosome"/>
    <property type="evidence" value="ECO:0007669"/>
    <property type="project" value="InterPro"/>
</dbReference>
<dbReference type="GO" id="GO:0006412">
    <property type="term" value="P:translation"/>
    <property type="evidence" value="ECO:0007669"/>
    <property type="project" value="UniProtKB-UniRule"/>
</dbReference>
<dbReference type="CDD" id="cd00337">
    <property type="entry name" value="Ribosomal_uL14"/>
    <property type="match status" value="1"/>
</dbReference>
<dbReference type="FunFam" id="2.40.150.20:FF:000001">
    <property type="entry name" value="50S ribosomal protein L14"/>
    <property type="match status" value="1"/>
</dbReference>
<dbReference type="Gene3D" id="2.40.150.20">
    <property type="entry name" value="Ribosomal protein L14"/>
    <property type="match status" value="1"/>
</dbReference>
<dbReference type="HAMAP" id="MF_01367">
    <property type="entry name" value="Ribosomal_uL14"/>
    <property type="match status" value="1"/>
</dbReference>
<dbReference type="InterPro" id="IPR000218">
    <property type="entry name" value="Ribosomal_uL14"/>
</dbReference>
<dbReference type="InterPro" id="IPR005745">
    <property type="entry name" value="Ribosomal_uL14_bac-type"/>
</dbReference>
<dbReference type="InterPro" id="IPR019972">
    <property type="entry name" value="Ribosomal_uL14_CS"/>
</dbReference>
<dbReference type="InterPro" id="IPR036853">
    <property type="entry name" value="Ribosomal_uL14_sf"/>
</dbReference>
<dbReference type="NCBIfam" id="TIGR01067">
    <property type="entry name" value="rplN_bact"/>
    <property type="match status" value="1"/>
</dbReference>
<dbReference type="PANTHER" id="PTHR11761">
    <property type="entry name" value="50S/60S RIBOSOMAL PROTEIN L14/L23"/>
    <property type="match status" value="1"/>
</dbReference>
<dbReference type="PANTHER" id="PTHR11761:SF3">
    <property type="entry name" value="LARGE RIBOSOMAL SUBUNIT PROTEIN UL14M"/>
    <property type="match status" value="1"/>
</dbReference>
<dbReference type="Pfam" id="PF00238">
    <property type="entry name" value="Ribosomal_L14"/>
    <property type="match status" value="1"/>
</dbReference>
<dbReference type="SMART" id="SM01374">
    <property type="entry name" value="Ribosomal_L14"/>
    <property type="match status" value="1"/>
</dbReference>
<dbReference type="SUPFAM" id="SSF50193">
    <property type="entry name" value="Ribosomal protein L14"/>
    <property type="match status" value="1"/>
</dbReference>
<dbReference type="PROSITE" id="PS00049">
    <property type="entry name" value="RIBOSOMAL_L14"/>
    <property type="match status" value="1"/>
</dbReference>
<sequence length="123" mass="13563">MIQQESMLNVADNSGARSVKCIKVLGGSRRRYACVGDIIVISIKEAIPRGKVKKGEVLKAVVVRTSKGVRRPDGSIIRFDTNACVILNKNTEQPIGTRIFGPVTRELRNEKFMKIISLAPEVL</sequence>
<organism>
    <name type="scientific">Hamiltonella defensa subsp. Acyrthosiphon pisum (strain 5AT)</name>
    <dbReference type="NCBI Taxonomy" id="572265"/>
    <lineage>
        <taxon>Bacteria</taxon>
        <taxon>Pseudomonadati</taxon>
        <taxon>Pseudomonadota</taxon>
        <taxon>Gammaproteobacteria</taxon>
        <taxon>Enterobacterales</taxon>
        <taxon>Enterobacteriaceae</taxon>
        <taxon>aphid secondary symbionts</taxon>
        <taxon>Candidatus Hamiltonella</taxon>
    </lineage>
</organism>
<feature type="chain" id="PRO_1000214983" description="Large ribosomal subunit protein uL14">
    <location>
        <begin position="1"/>
        <end position="123"/>
    </location>
</feature>
<gene>
    <name evidence="1" type="primary">rplN</name>
    <name type="ordered locus">HDEF_1856</name>
</gene>
<accession>C4K7A8</accession>
<evidence type="ECO:0000255" key="1">
    <source>
        <dbReference type="HAMAP-Rule" id="MF_01367"/>
    </source>
</evidence>
<evidence type="ECO:0000305" key="2"/>
<name>RL14_HAMD5</name>
<reference key="1">
    <citation type="journal article" date="2009" name="Proc. Natl. Acad. Sci. U.S.A.">
        <title>Hamiltonella defensa, genome evolution of protective bacterial endosymbiont from pathogenic ancestors.</title>
        <authorList>
            <person name="Degnan P.H."/>
            <person name="Yu Y."/>
            <person name="Sisneros N."/>
            <person name="Wing R.A."/>
            <person name="Moran N.A."/>
        </authorList>
    </citation>
    <scope>NUCLEOTIDE SEQUENCE [LARGE SCALE GENOMIC DNA]</scope>
    <source>
        <strain>5AT</strain>
    </source>
</reference>
<keyword id="KW-0687">Ribonucleoprotein</keyword>
<keyword id="KW-0689">Ribosomal protein</keyword>
<keyword id="KW-0694">RNA-binding</keyword>
<keyword id="KW-0699">rRNA-binding</keyword>
<proteinExistence type="inferred from homology"/>
<protein>
    <recommendedName>
        <fullName evidence="1">Large ribosomal subunit protein uL14</fullName>
    </recommendedName>
    <alternativeName>
        <fullName evidence="2">50S ribosomal protein L14</fullName>
    </alternativeName>
</protein>